<accession>Q8TGL0</accession>
<gene>
    <name type="ordered locus">YPL222C-A</name>
</gene>
<dbReference type="EMBL" id="Z73578">
    <property type="status" value="NOT_ANNOTATED_CDS"/>
    <property type="molecule type" value="Genomic_DNA"/>
</dbReference>
<dbReference type="EMBL" id="AF479983">
    <property type="protein sequence ID" value="AAL79296.1"/>
    <property type="molecule type" value="Genomic_DNA"/>
</dbReference>
<dbReference type="STRING" id="4932.YPL222C-A"/>
<dbReference type="PaxDb" id="4932-YPL222C-A"/>
<dbReference type="EnsemblFungi" id="YPL222C-A_mRNA">
    <property type="protein sequence ID" value="YPL222C-A"/>
    <property type="gene ID" value="YPL222C-A"/>
</dbReference>
<dbReference type="AGR" id="SGD:S000028722"/>
<dbReference type="SGD" id="S000028722">
    <property type="gene designation" value="YPL222C-A"/>
</dbReference>
<dbReference type="HOGENOM" id="CLU_2575683_0_0_1"/>
<name>YP22A_YEAST</name>
<comment type="miscellaneous">
    <text evidence="1">Completely overlaps FMP40.</text>
</comment>
<comment type="caution">
    <text evidence="2">Product of a dubious gene prediction unlikely to encode a functional protein. Because of that it is not part of the S.cerevisiae S288c complete/reference proteome set.</text>
</comment>
<feature type="chain" id="PRO_0000299810" description="Putative uncharacterized protein YPL222C-A">
    <location>
        <begin position="1"/>
        <end position="81"/>
    </location>
</feature>
<protein>
    <recommendedName>
        <fullName>Putative uncharacterized protein YPL222C-A</fullName>
    </recommendedName>
</protein>
<reference key="1">
    <citation type="journal article" date="1997" name="Nature">
        <title>The nucleotide sequence of Saccharomyces cerevisiae chromosome XVI.</title>
        <authorList>
            <person name="Bussey H."/>
            <person name="Storms R.K."/>
            <person name="Ahmed A."/>
            <person name="Albermann K."/>
            <person name="Allen E."/>
            <person name="Ansorge W."/>
            <person name="Araujo R."/>
            <person name="Aparicio A."/>
            <person name="Barrell B.G."/>
            <person name="Badcock K."/>
            <person name="Benes V."/>
            <person name="Botstein D."/>
            <person name="Bowman S."/>
            <person name="Brueckner M."/>
            <person name="Carpenter J."/>
            <person name="Cherry J.M."/>
            <person name="Chung E."/>
            <person name="Churcher C.M."/>
            <person name="Coster F."/>
            <person name="Davis K."/>
            <person name="Davis R.W."/>
            <person name="Dietrich F.S."/>
            <person name="Delius H."/>
            <person name="DiPaolo T."/>
            <person name="Dubois E."/>
            <person name="Duesterhoeft A."/>
            <person name="Duncan M."/>
            <person name="Floeth M."/>
            <person name="Fortin N."/>
            <person name="Friesen J.D."/>
            <person name="Fritz C."/>
            <person name="Goffeau A."/>
            <person name="Hall J."/>
            <person name="Hebling U."/>
            <person name="Heumann K."/>
            <person name="Hilbert H."/>
            <person name="Hillier L.W."/>
            <person name="Hunicke-Smith S."/>
            <person name="Hyman R.W."/>
            <person name="Johnston M."/>
            <person name="Kalman S."/>
            <person name="Kleine K."/>
            <person name="Komp C."/>
            <person name="Kurdi O."/>
            <person name="Lashkari D."/>
            <person name="Lew H."/>
            <person name="Lin A."/>
            <person name="Lin D."/>
            <person name="Louis E.J."/>
            <person name="Marathe R."/>
            <person name="Messenguy F."/>
            <person name="Mewes H.-W."/>
            <person name="Mirtipati S."/>
            <person name="Moestl D."/>
            <person name="Mueller-Auer S."/>
            <person name="Namath A."/>
            <person name="Nentwich U."/>
            <person name="Oefner P."/>
            <person name="Pearson D."/>
            <person name="Petel F.X."/>
            <person name="Pohl T.M."/>
            <person name="Purnelle B."/>
            <person name="Rajandream M.A."/>
            <person name="Rechmann S."/>
            <person name="Rieger M."/>
            <person name="Riles L."/>
            <person name="Roberts D."/>
            <person name="Schaefer M."/>
            <person name="Scharfe M."/>
            <person name="Scherens B."/>
            <person name="Schramm S."/>
            <person name="Schroeder M."/>
            <person name="Sdicu A.-M."/>
            <person name="Tettelin H."/>
            <person name="Urrestarazu L.A."/>
            <person name="Ushinsky S."/>
            <person name="Vierendeels F."/>
            <person name="Vissers S."/>
            <person name="Voss H."/>
            <person name="Walsh S.V."/>
            <person name="Wambutt R."/>
            <person name="Wang Y."/>
            <person name="Wedler E."/>
            <person name="Wedler H."/>
            <person name="Winnett E."/>
            <person name="Zhong W.-W."/>
            <person name="Zollner A."/>
            <person name="Vo D.H."/>
            <person name="Hani J."/>
        </authorList>
    </citation>
    <scope>NUCLEOTIDE SEQUENCE [LARGE SCALE GENOMIC DNA]</scope>
    <source>
        <strain>ATCC 204508 / S288c</strain>
    </source>
</reference>
<reference key="2">
    <citation type="journal article" date="2014" name="G3 (Bethesda)">
        <title>The reference genome sequence of Saccharomyces cerevisiae: Then and now.</title>
        <authorList>
            <person name="Engel S.R."/>
            <person name="Dietrich F.S."/>
            <person name="Fisk D.G."/>
            <person name="Binkley G."/>
            <person name="Balakrishnan R."/>
            <person name="Costanzo M.C."/>
            <person name="Dwight S.S."/>
            <person name="Hitz B.C."/>
            <person name="Karra K."/>
            <person name="Nash R.S."/>
            <person name="Weng S."/>
            <person name="Wong E.D."/>
            <person name="Lloyd P."/>
            <person name="Skrzypek M.S."/>
            <person name="Miyasato S.R."/>
            <person name="Simison M."/>
            <person name="Cherry J.M."/>
        </authorList>
    </citation>
    <scope>GENOME REANNOTATION</scope>
    <source>
        <strain>ATCC 204508 / S288c</strain>
    </source>
</reference>
<reference key="3">
    <citation type="journal article" date="2002" name="Nat. Biotechnol.">
        <title>An integrated approach for finding overlooked genes in yeast.</title>
        <authorList>
            <person name="Kumar A."/>
            <person name="Harrison P.M."/>
            <person name="Cheung K.-H."/>
            <person name="Lan N."/>
            <person name="Echols N."/>
            <person name="Bertone P."/>
            <person name="Miller P."/>
            <person name="Gerstein M.B."/>
            <person name="Snyder M."/>
        </authorList>
    </citation>
    <scope>NUCLEOTIDE SEQUENCE [GENOMIC DNA]</scope>
</reference>
<organism>
    <name type="scientific">Saccharomyces cerevisiae (strain ATCC 204508 / S288c)</name>
    <name type="common">Baker's yeast</name>
    <dbReference type="NCBI Taxonomy" id="559292"/>
    <lineage>
        <taxon>Eukaryota</taxon>
        <taxon>Fungi</taxon>
        <taxon>Dikarya</taxon>
        <taxon>Ascomycota</taxon>
        <taxon>Saccharomycotina</taxon>
        <taxon>Saccharomycetes</taxon>
        <taxon>Saccharomycetales</taxon>
        <taxon>Saccharomycetaceae</taxon>
        <taxon>Saccharomyces</taxon>
    </lineage>
</organism>
<sequence length="81" mass="9136">MGLRSLGIASSTQMYLAPNWDLVGHPFDCTLNRRLLPPVPNFWGQTTGWLSWQATLLQQFPWVGPRSNSLGSNCVFLAIFR</sequence>
<proteinExistence type="uncertain"/>
<evidence type="ECO:0000305" key="1"/>
<evidence type="ECO:0000305" key="2">
    <source>
    </source>
</evidence>